<accession>Q0AK98</accession>
<sequence length="127" mass="14636">MTRARRQAEARGRWAEWLAMAWLVAKGYRLLDHRARTAAGEIDLVARRGEYLVFIEVKARATRAEALDSIGPRQRGRITRAASIWRAPRSSLHHLHLRYDLVLVVPGRWPQHRRAAWVPGDSARDLL</sequence>
<name>Y3014_MARMM</name>
<dbReference type="EMBL" id="CP000449">
    <property type="protein sequence ID" value="ABI67295.1"/>
    <property type="molecule type" value="Genomic_DNA"/>
</dbReference>
<dbReference type="RefSeq" id="WP_011644939.1">
    <property type="nucleotide sequence ID" value="NC_008347.1"/>
</dbReference>
<dbReference type="SMR" id="Q0AK98"/>
<dbReference type="STRING" id="394221.Mmar10_3014"/>
<dbReference type="KEGG" id="mmr:Mmar10_3014"/>
<dbReference type="eggNOG" id="COG0792">
    <property type="taxonomic scope" value="Bacteria"/>
</dbReference>
<dbReference type="HOGENOM" id="CLU_115353_0_2_5"/>
<dbReference type="OrthoDB" id="9812968at2"/>
<dbReference type="Proteomes" id="UP000001964">
    <property type="component" value="Chromosome"/>
</dbReference>
<dbReference type="GO" id="GO:0003676">
    <property type="term" value="F:nucleic acid binding"/>
    <property type="evidence" value="ECO:0007669"/>
    <property type="project" value="InterPro"/>
</dbReference>
<dbReference type="Gene3D" id="3.40.1350.10">
    <property type="match status" value="1"/>
</dbReference>
<dbReference type="HAMAP" id="MF_00048">
    <property type="entry name" value="UPF0102"/>
    <property type="match status" value="1"/>
</dbReference>
<dbReference type="InterPro" id="IPR011335">
    <property type="entry name" value="Restrct_endonuc-II-like"/>
</dbReference>
<dbReference type="InterPro" id="IPR011856">
    <property type="entry name" value="tRNA_endonuc-like_dom_sf"/>
</dbReference>
<dbReference type="InterPro" id="IPR003509">
    <property type="entry name" value="UPF0102_YraN-like"/>
</dbReference>
<dbReference type="NCBIfam" id="NF009151">
    <property type="entry name" value="PRK12497.1-5"/>
    <property type="match status" value="1"/>
</dbReference>
<dbReference type="PANTHER" id="PTHR34039">
    <property type="entry name" value="UPF0102 PROTEIN YRAN"/>
    <property type="match status" value="1"/>
</dbReference>
<dbReference type="PANTHER" id="PTHR34039:SF1">
    <property type="entry name" value="UPF0102 PROTEIN YRAN"/>
    <property type="match status" value="1"/>
</dbReference>
<dbReference type="Pfam" id="PF02021">
    <property type="entry name" value="UPF0102"/>
    <property type="match status" value="1"/>
</dbReference>
<dbReference type="SUPFAM" id="SSF52980">
    <property type="entry name" value="Restriction endonuclease-like"/>
    <property type="match status" value="1"/>
</dbReference>
<evidence type="ECO:0000255" key="1">
    <source>
        <dbReference type="HAMAP-Rule" id="MF_00048"/>
    </source>
</evidence>
<comment type="similarity">
    <text evidence="1">Belongs to the UPF0102 family.</text>
</comment>
<gene>
    <name type="ordered locus">Mmar10_3014</name>
</gene>
<keyword id="KW-1185">Reference proteome</keyword>
<reference key="1">
    <citation type="submission" date="2006-08" db="EMBL/GenBank/DDBJ databases">
        <title>Complete sequence of Maricaulis maris MCS10.</title>
        <authorList>
            <consortium name="US DOE Joint Genome Institute"/>
            <person name="Copeland A."/>
            <person name="Lucas S."/>
            <person name="Lapidus A."/>
            <person name="Barry K."/>
            <person name="Detter J.C."/>
            <person name="Glavina del Rio T."/>
            <person name="Hammon N."/>
            <person name="Israni S."/>
            <person name="Dalin E."/>
            <person name="Tice H."/>
            <person name="Pitluck S."/>
            <person name="Saunders E."/>
            <person name="Brettin T."/>
            <person name="Bruce D."/>
            <person name="Han C."/>
            <person name="Tapia R."/>
            <person name="Gilna P."/>
            <person name="Schmutz J."/>
            <person name="Larimer F."/>
            <person name="Land M."/>
            <person name="Hauser L."/>
            <person name="Kyrpides N."/>
            <person name="Mikhailova N."/>
            <person name="Viollier P."/>
            <person name="Stephens C."/>
            <person name="Richardson P."/>
        </authorList>
    </citation>
    <scope>NUCLEOTIDE SEQUENCE [LARGE SCALE GENOMIC DNA]</scope>
    <source>
        <strain>MCS10</strain>
    </source>
</reference>
<protein>
    <recommendedName>
        <fullName evidence="1">UPF0102 protein Mmar10_3014</fullName>
    </recommendedName>
</protein>
<organism>
    <name type="scientific">Maricaulis maris (strain MCS10)</name>
    <name type="common">Caulobacter maris</name>
    <dbReference type="NCBI Taxonomy" id="394221"/>
    <lineage>
        <taxon>Bacteria</taxon>
        <taxon>Pseudomonadati</taxon>
        <taxon>Pseudomonadota</taxon>
        <taxon>Alphaproteobacteria</taxon>
        <taxon>Maricaulales</taxon>
        <taxon>Maricaulaceae</taxon>
        <taxon>Maricaulis</taxon>
    </lineage>
</organism>
<proteinExistence type="inferred from homology"/>
<feature type="chain" id="PRO_0000336199" description="UPF0102 protein Mmar10_3014">
    <location>
        <begin position="1"/>
        <end position="127"/>
    </location>
</feature>